<gene>
    <name evidence="3" type="primary">slc7a6</name>
</gene>
<reference evidence="6" key="1">
    <citation type="submission" date="2006-12" db="EMBL/GenBank/DDBJ databases">
        <authorList>
            <consortium name="NIH - Xenopus Gene Collection (XGC) project"/>
        </authorList>
    </citation>
    <scope>NUCLEOTIDE SEQUENCE [LARGE SCALE MRNA]</scope>
    <source>
        <tissue evidence="6">Oocyte</tissue>
    </source>
</reference>
<name>YLAT2_XENLA</name>
<sequence length="510" mass="56001">MKETENQTVPLNSTSPEDTSNTSNMASEGTHETMQLKKEISLLNGVSLIVGNMIGSGIFVSPKGVLIYSASYGLSLILWALGGIFSVIGAPCYAELGTTIKKSGASYAYILEAFGGFVAFIRLWTSLLIIEPTSQAVIAITFANYLVQPVFPSCNPPYMASRLIAAACVCLITFINCAYVKWGTRVQDLFTYAKVIALIAIIITGIVKLSQGQTENFEDSFAGSSWDAGDISLGLYSALFSYSGWDTLNFVTEEIKNPERNLPLSIGISMPLVTIIYILTNVAYYTVLDFNAVVASEAVAVTFADLVYGVFSWTIPVAVALSCFGGLNSSILAASRLFFVGAREGHLPDMLCLIHRERFTPVPALLFNCAATLVYLAVKDVFQLINYYSFSYWFFVGLSIAGQIYLRYKRPELPRPVKLSLFYPIVFCLCTVFLVIVPLYSDTVNSLIGIGIALSGIPVYFMGIYLPESKRPPFISKILAFLTRWTQMIFSCVLTEMDPNDEKKEEAKSN</sequence>
<organism>
    <name type="scientific">Xenopus laevis</name>
    <name type="common">African clawed frog</name>
    <dbReference type="NCBI Taxonomy" id="8355"/>
    <lineage>
        <taxon>Eukaryota</taxon>
        <taxon>Metazoa</taxon>
        <taxon>Chordata</taxon>
        <taxon>Craniata</taxon>
        <taxon>Vertebrata</taxon>
        <taxon>Euteleostomi</taxon>
        <taxon>Amphibia</taxon>
        <taxon>Batrachia</taxon>
        <taxon>Anura</taxon>
        <taxon>Pipoidea</taxon>
        <taxon>Pipidae</taxon>
        <taxon>Xenopodinae</taxon>
        <taxon>Xenopus</taxon>
        <taxon>Xenopus</taxon>
    </lineage>
</organism>
<accession>A1L3M3</accession>
<comment type="function">
    <text evidence="1 2 3">Heterodimer with SLC3A2, that functions as an antiporter which operates as an efflux routeby exporting cationic amino acids such as L-arginine from inside the cells in exchange with neutral amino acids like L-leucine, L-glutamine and isoleucine, plus sodium ions and may participate in nitric oxide synthesis. Also exchanges L-arginine with L-lysine in a sodium-independent manner. The transport mechanism is electroneutral and operates with a stoichiometry of 1: 1 (By similarity). Contributes to ammonia-induced increase of L-arginine uptake in cerebral cortical astrocytes leading to ammonia-dependent increase of nitric oxide (NO) production via inducible nitric oxide synthase (iNOS) induction, and protein nitration (By similarity). May mediate transport of ornithine in retinal pigment epithelial (RPE) cells (By similarity). May also transport glycine betaine in a sodium dependent manner from the cumulus granulosa into the enclosed oocyte (By similarity).</text>
</comment>
<comment type="catalytic activity">
    <reaction evidence="3">
        <text>L-lysine(out) + L-arginine(in) = L-lysine(in) + L-arginine(out)</text>
        <dbReference type="Rhea" id="RHEA:70827"/>
        <dbReference type="ChEBI" id="CHEBI:32551"/>
        <dbReference type="ChEBI" id="CHEBI:32682"/>
    </reaction>
</comment>
<comment type="catalytic activity">
    <reaction evidence="3">
        <text>L-leucine(out) + L-arginine(in) + Na(+)(out) = L-leucine(in) + L-arginine(out) + Na(+)(in)</text>
        <dbReference type="Rhea" id="RHEA:70831"/>
        <dbReference type="ChEBI" id="CHEBI:29101"/>
        <dbReference type="ChEBI" id="CHEBI:32682"/>
        <dbReference type="ChEBI" id="CHEBI:57427"/>
    </reaction>
</comment>
<comment type="catalytic activity">
    <reaction evidence="3">
        <text>L-glutamine(out) + L-arginine(in) + Na(+)(out) = L-glutamine(in) + L-arginine(out) + Na(+)(in)</text>
        <dbReference type="Rhea" id="RHEA:70835"/>
        <dbReference type="ChEBI" id="CHEBI:29101"/>
        <dbReference type="ChEBI" id="CHEBI:32682"/>
        <dbReference type="ChEBI" id="CHEBI:58359"/>
    </reaction>
</comment>
<comment type="catalytic activity">
    <reaction evidence="3">
        <text>L-histidine(out) + L-arginine(in) + Na(+)(out) = L-histidine(in) + L-arginine(out) + Na(+)(in)</text>
        <dbReference type="Rhea" id="RHEA:70839"/>
        <dbReference type="ChEBI" id="CHEBI:29101"/>
        <dbReference type="ChEBI" id="CHEBI:32682"/>
        <dbReference type="ChEBI" id="CHEBI:57595"/>
    </reaction>
</comment>
<comment type="catalytic activity">
    <reaction evidence="3">
        <text>L-cysteine(out) + L-arginine(in) + Na(+)(out) = L-cysteine(in) + L-arginine(out) + Na(+)(in)</text>
        <dbReference type="Rhea" id="RHEA:70847"/>
        <dbReference type="ChEBI" id="CHEBI:29101"/>
        <dbReference type="ChEBI" id="CHEBI:32682"/>
        <dbReference type="ChEBI" id="CHEBI:35235"/>
    </reaction>
</comment>
<comment type="catalytic activity">
    <reaction evidence="3">
        <text>L-arginine(in) + L-methionine(out) + Na(+)(out) = L-arginine(out) + L-methionine(in) + Na(+)(in)</text>
        <dbReference type="Rhea" id="RHEA:70843"/>
        <dbReference type="ChEBI" id="CHEBI:29101"/>
        <dbReference type="ChEBI" id="CHEBI:32682"/>
        <dbReference type="ChEBI" id="CHEBI:57844"/>
    </reaction>
</comment>
<comment type="subunit">
    <text evidence="3">Disulfide-linked heterodimer with the amino acid transport protein SLC3A2/4F2hc.</text>
</comment>
<comment type="subcellular location">
    <subcellularLocation>
        <location evidence="3">Cell membrane</location>
        <topology evidence="4">Multi-pass membrane protein</topology>
    </subcellularLocation>
</comment>
<comment type="similarity">
    <text evidence="4">Belongs to the amino acid-polyamine-organocation (APC) superfamily. L-type amino acid transporter (LAT) (TC 2.A.3.8) family.</text>
</comment>
<keyword id="KW-0029">Amino-acid transport</keyword>
<keyword id="KW-1003">Cell membrane</keyword>
<keyword id="KW-0472">Membrane</keyword>
<keyword id="KW-1185">Reference proteome</keyword>
<keyword id="KW-0812">Transmembrane</keyword>
<keyword id="KW-1133">Transmembrane helix</keyword>
<keyword id="KW-0813">Transport</keyword>
<proteinExistence type="evidence at transcript level"/>
<feature type="chain" id="PRO_0000341480" description="Y+L amino acid transporter 2">
    <location>
        <begin position="1"/>
        <end position="510"/>
    </location>
</feature>
<feature type="topological domain" description="Cytoplasmic" evidence="4">
    <location>
        <begin position="1"/>
        <end position="39"/>
    </location>
</feature>
<feature type="transmembrane region" description="Helical" evidence="4">
    <location>
        <begin position="40"/>
        <end position="60"/>
    </location>
</feature>
<feature type="topological domain" description="Extracellular" evidence="4">
    <location>
        <begin position="61"/>
        <end position="64"/>
    </location>
</feature>
<feature type="transmembrane region" description="Helical" evidence="4">
    <location>
        <begin position="65"/>
        <end position="85"/>
    </location>
</feature>
<feature type="topological domain" description="Cytoplasmic" evidence="4">
    <location>
        <begin position="86"/>
        <end position="109"/>
    </location>
</feature>
<feature type="transmembrane region" description="Helical" evidence="4">
    <location>
        <begin position="110"/>
        <end position="130"/>
    </location>
</feature>
<feature type="topological domain" description="Extracellular" evidence="4">
    <location>
        <begin position="131"/>
        <end position="162"/>
    </location>
</feature>
<feature type="transmembrane region" description="Helical" evidence="4">
    <location>
        <begin position="163"/>
        <end position="183"/>
    </location>
</feature>
<feature type="topological domain" description="Cytoplasmic" evidence="4">
    <location>
        <begin position="184"/>
        <end position="188"/>
    </location>
</feature>
<feature type="transmembrane region" description="Helical" evidence="4">
    <location>
        <begin position="189"/>
        <end position="209"/>
    </location>
</feature>
<feature type="topological domain" description="Extracellular" evidence="4">
    <location>
        <begin position="210"/>
        <end position="230"/>
    </location>
</feature>
<feature type="transmembrane region" description="Helical" evidence="4">
    <location>
        <begin position="231"/>
        <end position="251"/>
    </location>
</feature>
<feature type="topological domain" description="Cytoplasmic" evidence="4">
    <location>
        <begin position="252"/>
        <end position="261"/>
    </location>
</feature>
<feature type="transmembrane region" description="Helical" evidence="4">
    <location>
        <begin position="262"/>
        <end position="282"/>
    </location>
</feature>
<feature type="topological domain" description="Extracellular" evidence="4">
    <location>
        <begin position="283"/>
        <end position="305"/>
    </location>
</feature>
<feature type="transmembrane region" description="Helical" evidence="4">
    <location>
        <begin position="306"/>
        <end position="326"/>
    </location>
</feature>
<feature type="topological domain" description="Cytoplasmic" evidence="4">
    <location>
        <begin position="327"/>
        <end position="358"/>
    </location>
</feature>
<feature type="transmembrane region" description="Helical" evidence="4">
    <location>
        <begin position="359"/>
        <end position="379"/>
    </location>
</feature>
<feature type="topological domain" description="Extracellular" evidence="4">
    <location>
        <position position="380"/>
    </location>
</feature>
<feature type="transmembrane region" description="Helical" evidence="4">
    <location>
        <begin position="381"/>
        <end position="401"/>
    </location>
</feature>
<feature type="topological domain" description="Cytoplasmic" evidence="4">
    <location>
        <begin position="402"/>
        <end position="418"/>
    </location>
</feature>
<feature type="transmembrane region" description="Helical" evidence="4">
    <location>
        <begin position="419"/>
        <end position="439"/>
    </location>
</feature>
<feature type="topological domain" description="Extracellular" evidence="4">
    <location>
        <begin position="440"/>
        <end position="446"/>
    </location>
</feature>
<feature type="transmembrane region" description="Helical" evidence="4">
    <location>
        <begin position="447"/>
        <end position="467"/>
    </location>
</feature>
<feature type="topological domain" description="Cytoplasmic" evidence="4">
    <location>
        <begin position="468"/>
        <end position="510"/>
    </location>
</feature>
<feature type="region of interest" description="Disordered" evidence="5">
    <location>
        <begin position="1"/>
        <end position="30"/>
    </location>
</feature>
<feature type="compositionally biased region" description="Polar residues" evidence="5">
    <location>
        <begin position="1"/>
        <end position="27"/>
    </location>
</feature>
<evidence type="ECO:0000250" key="1">
    <source>
        <dbReference type="UniProtKB" id="D3ZMM8"/>
    </source>
</evidence>
<evidence type="ECO:0000250" key="2">
    <source>
        <dbReference type="UniProtKB" id="Q8BGK6"/>
    </source>
</evidence>
<evidence type="ECO:0000250" key="3">
    <source>
        <dbReference type="UniProtKB" id="Q92536"/>
    </source>
</evidence>
<evidence type="ECO:0000255" key="4"/>
<evidence type="ECO:0000256" key="5">
    <source>
        <dbReference type="SAM" id="MobiDB-lite"/>
    </source>
</evidence>
<evidence type="ECO:0000312" key="6">
    <source>
        <dbReference type="EMBL" id="AAI30195.1"/>
    </source>
</evidence>
<dbReference type="EMBL" id="BC130194">
    <property type="protein sequence ID" value="AAI30195.1"/>
    <property type="molecule type" value="mRNA"/>
</dbReference>
<dbReference type="RefSeq" id="NP_001091245.1">
    <property type="nucleotide sequence ID" value="NM_001097776.1"/>
</dbReference>
<dbReference type="SMR" id="A1L3M3"/>
<dbReference type="DNASU" id="100037044"/>
<dbReference type="GeneID" id="100037044"/>
<dbReference type="KEGG" id="xla:100037044"/>
<dbReference type="AGR" id="Xenbase:XB-GENE-963220"/>
<dbReference type="CTD" id="100037044"/>
<dbReference type="Xenbase" id="XB-GENE-963220">
    <property type="gene designation" value="slc7a6.L"/>
</dbReference>
<dbReference type="OrthoDB" id="10062876at2759"/>
<dbReference type="Proteomes" id="UP000186698">
    <property type="component" value="Chromosome 4L"/>
</dbReference>
<dbReference type="Bgee" id="100037044">
    <property type="expression patterns" value="Expressed in zone of skin and 19 other cell types or tissues"/>
</dbReference>
<dbReference type="GO" id="GO:0005886">
    <property type="term" value="C:plasma membrane"/>
    <property type="evidence" value="ECO:0007669"/>
    <property type="project" value="UniProtKB-SubCell"/>
</dbReference>
<dbReference type="GO" id="GO:0034618">
    <property type="term" value="F:arginine binding"/>
    <property type="evidence" value="ECO:0000250"/>
    <property type="project" value="UniProtKB"/>
</dbReference>
<dbReference type="GO" id="GO:0015179">
    <property type="term" value="F:L-amino acid transmembrane transporter activity"/>
    <property type="evidence" value="ECO:0000318"/>
    <property type="project" value="GO_Central"/>
</dbReference>
<dbReference type="GO" id="GO:0061459">
    <property type="term" value="F:L-arginine transmembrane transporter activity"/>
    <property type="evidence" value="ECO:0000250"/>
    <property type="project" value="UniProtKB"/>
</dbReference>
<dbReference type="GO" id="GO:0106439">
    <property type="term" value="F:L-lysine:L-arginine antiporter activity"/>
    <property type="evidence" value="ECO:0000250"/>
    <property type="project" value="UniProtKB"/>
</dbReference>
<dbReference type="GO" id="GO:0003333">
    <property type="term" value="P:amino acid transmembrane transport"/>
    <property type="evidence" value="ECO:0000318"/>
    <property type="project" value="GO_Central"/>
</dbReference>
<dbReference type="GO" id="GO:0031460">
    <property type="term" value="P:glycine betaine transport"/>
    <property type="evidence" value="ECO:0000250"/>
    <property type="project" value="UniProtKB"/>
</dbReference>
<dbReference type="GO" id="GO:1903826">
    <property type="term" value="P:L-arginine transmembrane transport"/>
    <property type="evidence" value="ECO:0000250"/>
    <property type="project" value="UniProtKB"/>
</dbReference>
<dbReference type="GO" id="GO:0015804">
    <property type="term" value="P:neutral amino acid transport"/>
    <property type="evidence" value="ECO:0000250"/>
    <property type="project" value="UniProtKB"/>
</dbReference>
<dbReference type="GO" id="GO:0006809">
    <property type="term" value="P:nitric oxide biosynthetic process"/>
    <property type="evidence" value="ECO:0000250"/>
    <property type="project" value="UniProtKB"/>
</dbReference>
<dbReference type="FunFam" id="1.20.1740.10:FF:000003">
    <property type="entry name" value="Y+L amino acid transporter 1 isoform X1"/>
    <property type="match status" value="1"/>
</dbReference>
<dbReference type="Gene3D" id="1.20.1740.10">
    <property type="entry name" value="Amino acid/polyamine transporter I"/>
    <property type="match status" value="1"/>
</dbReference>
<dbReference type="InterPro" id="IPR002293">
    <property type="entry name" value="AA/rel_permease1"/>
</dbReference>
<dbReference type="InterPro" id="IPR050598">
    <property type="entry name" value="AminoAcid_Transporter"/>
</dbReference>
<dbReference type="PANTHER" id="PTHR11785">
    <property type="entry name" value="AMINO ACID TRANSPORTER"/>
    <property type="match status" value="1"/>
</dbReference>
<dbReference type="PANTHER" id="PTHR11785:SF398">
    <property type="entry name" value="Y+L AMINO ACID TRANSPORTER 2"/>
    <property type="match status" value="1"/>
</dbReference>
<dbReference type="Pfam" id="PF13520">
    <property type="entry name" value="AA_permease_2"/>
    <property type="match status" value="1"/>
</dbReference>
<dbReference type="PIRSF" id="PIRSF006060">
    <property type="entry name" value="AA_transporter"/>
    <property type="match status" value="1"/>
</dbReference>
<protein>
    <recommendedName>
        <fullName evidence="3">Y+L amino acid transporter 2</fullName>
    </recommendedName>
    <alternativeName>
        <fullName>Solute carrier family 7 member 6</fullName>
    </alternativeName>
    <alternativeName>
        <fullName>y(+)L-type amino acid transporter 2</fullName>
        <shortName>Y+LAT2</shortName>
        <shortName>y+LAT-2</shortName>
    </alternativeName>
</protein>